<name>DHH_DANRE</name>
<proteinExistence type="inferred from homology"/>
<reference key="1">
    <citation type="journal article" date="1998" name="Science">
        <title>Zebrafish hox clusters and vertebrate genome evolution.</title>
        <authorList>
            <person name="Amores A."/>
            <person name="Force A."/>
            <person name="Yan Y.-L."/>
            <person name="Joly L."/>
            <person name="Amemiya C."/>
            <person name="Fritz A."/>
            <person name="Ho R.K."/>
            <person name="Langeland J."/>
            <person name="Prince V.E."/>
            <person name="Wang Y.-L."/>
            <person name="Westerfield M."/>
            <person name="Ekker M."/>
            <person name="Postlethwait J.H."/>
        </authorList>
    </citation>
    <scope>NUCLEOTIDE SEQUENCE [GENOMIC DNA]</scope>
</reference>
<reference key="2">
    <citation type="journal article" date="1996" name="Proc. Natl. Acad. Sci. U.S.A.">
        <title>Evolutionary analyses of hedgehog and Hoxd-10 genes in fish species closely related to the zebrafish.</title>
        <authorList>
            <person name="Zardoya R."/>
            <person name="Abouheif E."/>
            <person name="Meyer A."/>
        </authorList>
    </citation>
    <scope>NUCLEOTIDE SEQUENCE [GENOMIC DNA] OF 14-71</scope>
    <source>
        <tissue>Muscle</tissue>
    </source>
</reference>
<comment type="function">
    <text evidence="1">Intercellular signal essential for a variety of patterning events during development.</text>
</comment>
<comment type="subcellular location">
    <subcellularLocation>
        <location evidence="1">Cell membrane</location>
    </subcellularLocation>
    <subcellularLocation>
        <location evidence="1">Secreted</location>
        <location evidence="1">Extracellular space</location>
    </subcellularLocation>
    <text evidence="1">Desert hedgehog protein N-product: Cell membrane; Lipid-anchor; Extracellular side. The N-terminal peptide remains associated with the cell surface. Desert hedgehog protein C-product: Secreted, extracellular space. The C-terminal peptide diffuses from the cell.</text>
</comment>
<comment type="domain">
    <text evidence="1">The desert hedgehog protein N-product binds calcium and zinc ions; this stabilizes the protein fold and is essential for protein-protein interactions mediated by this domain.</text>
</comment>
<comment type="PTM">
    <text evidence="1">The C-terminal domain displays an autoproteolysis activity and a cholesterol transferase activity. Both activities result in the cleavage of the full-length protein and covalent attachment of a cholesterol moiety to the C-terminal of the newly generated N-terminal fragment (N-product). This covalent modification appears to play an essential role in restricting the spatial distribution of the protein activity to the cell surface. The N-product is the active species in both local and long-range signaling, whereas the C-product has no signaling activity (By similarity).</text>
</comment>
<comment type="similarity">
    <text evidence="3">Belongs to the hedgehog family.</text>
</comment>
<feature type="chain" id="PRO_0000058750" description="Desert hedgehog protein">
    <location>
        <begin position="1" status="less than"/>
        <end position="88" status="greater than"/>
    </location>
</feature>
<feature type="binding site" evidence="2">
    <location>
        <position position="26"/>
    </location>
    <ligand>
        <name>Ca(2+)</name>
        <dbReference type="ChEBI" id="CHEBI:29108"/>
        <label>1</label>
    </ligand>
</feature>
<feature type="binding site" evidence="2">
    <location>
        <position position="27"/>
    </location>
    <ligand>
        <name>Ca(2+)</name>
        <dbReference type="ChEBI" id="CHEBI:29108"/>
        <label>1</label>
    </ligand>
</feature>
<feature type="binding site" evidence="2">
    <location>
        <position position="27"/>
    </location>
    <ligand>
        <name>Ca(2+)</name>
        <dbReference type="ChEBI" id="CHEBI:29108"/>
        <label>2</label>
    </ligand>
</feature>
<feature type="binding site" evidence="2">
    <location>
        <position position="30"/>
    </location>
    <ligand>
        <name>Ca(2+)</name>
        <dbReference type="ChEBI" id="CHEBI:29108"/>
        <label>2</label>
    </ligand>
</feature>
<feature type="binding site" evidence="2">
    <location>
        <position position="32"/>
    </location>
    <ligand>
        <name>Ca(2+)</name>
        <dbReference type="ChEBI" id="CHEBI:29108"/>
        <label>2</label>
    </ligand>
</feature>
<feature type="binding site" evidence="2">
    <location>
        <position position="41"/>
    </location>
    <ligand>
        <name>Zn(2+)</name>
        <dbReference type="ChEBI" id="CHEBI:29105"/>
    </ligand>
</feature>
<feature type="binding site" evidence="2">
    <location>
        <position position="48"/>
    </location>
    <ligand>
        <name>Zn(2+)</name>
        <dbReference type="ChEBI" id="CHEBI:29105"/>
    </ligand>
</feature>
<feature type="binding site" evidence="2">
    <location>
        <position position="83"/>
    </location>
    <ligand>
        <name>Zn(2+)</name>
        <dbReference type="ChEBI" id="CHEBI:29105"/>
    </ligand>
</feature>
<feature type="sequence conflict" description="In Ref. 2; AAB38613." evidence="3" ref="2">
    <original>Q</original>
    <variation>M</variation>
    <location>
        <position position="17"/>
    </location>
</feature>
<feature type="sequence conflict" description="In Ref. 2; AAB38613." evidence="3" ref="2">
    <original>R</original>
    <variation>K</variation>
    <location>
        <position position="22"/>
    </location>
</feature>
<feature type="sequence conflict" description="In Ref. 2; AAB38613." evidence="3" ref="2">
    <original>A</original>
    <variation>G</variation>
    <location>
        <position position="28"/>
    </location>
</feature>
<feature type="sequence conflict" description="In Ref. 2; AAB38613." evidence="3" ref="2">
    <original>HHPPG</original>
    <variation>NHLED</variation>
    <location>
        <begin position="34"/>
        <end position="38"/>
    </location>
</feature>
<feature type="sequence conflict" description="In Ref. 2; AAB38613." evidence="3" ref="2">
    <original>TK</original>
    <variation>RN</variation>
    <location>
        <begin position="56"/>
        <end position="57"/>
    </location>
</feature>
<feature type="sequence conflict" description="In Ref. 2; AAB38613." evidence="3" ref="2">
    <original>L</original>
    <variation>M</variation>
    <location>
        <position position="61"/>
    </location>
</feature>
<feature type="sequence conflict" description="In Ref. 2; AAB38613." evidence="3" ref="2">
    <original>Q</original>
    <variation>R</variation>
    <location>
        <position position="64"/>
    </location>
</feature>
<feature type="non-terminal residue">
    <location>
        <position position="1"/>
    </location>
</feature>
<feature type="non-terminal residue">
    <location>
        <position position="88"/>
    </location>
</feature>
<accession>P79729</accession>
<accession>Q9YGU3</accession>
<dbReference type="EMBL" id="AF071236">
    <property type="protein sequence ID" value="AAD15931.1"/>
    <property type="molecule type" value="Genomic_DNA"/>
</dbReference>
<dbReference type="EMBL" id="U51388">
    <property type="protein sequence ID" value="AAB38613.1"/>
    <property type="molecule type" value="Genomic_DNA"/>
</dbReference>
<dbReference type="SMR" id="P79729"/>
<dbReference type="STRING" id="7955.ENSDARP00000053870"/>
<dbReference type="PaxDb" id="7955-ENSDARP00000053870"/>
<dbReference type="AGR" id="ZFIN:ZDB-GENE-990714-5"/>
<dbReference type="ZFIN" id="ZDB-GENE-990714-5">
    <property type="gene designation" value="dhh"/>
</dbReference>
<dbReference type="eggNOG" id="KOG3638">
    <property type="taxonomic scope" value="Eukaryota"/>
</dbReference>
<dbReference type="InParanoid" id="P79729"/>
<dbReference type="SignaLink" id="P79729"/>
<dbReference type="Proteomes" id="UP000000437">
    <property type="component" value="Unplaced"/>
</dbReference>
<dbReference type="GO" id="GO:0005576">
    <property type="term" value="C:extracellular region"/>
    <property type="evidence" value="ECO:0007669"/>
    <property type="project" value="UniProtKB-SubCell"/>
</dbReference>
<dbReference type="GO" id="GO:0005886">
    <property type="term" value="C:plasma membrane"/>
    <property type="evidence" value="ECO:0007669"/>
    <property type="project" value="UniProtKB-SubCell"/>
</dbReference>
<dbReference type="GO" id="GO:0046872">
    <property type="term" value="F:metal ion binding"/>
    <property type="evidence" value="ECO:0007669"/>
    <property type="project" value="UniProtKB-KW"/>
</dbReference>
<dbReference type="GO" id="GO:0008233">
    <property type="term" value="F:peptidase activity"/>
    <property type="evidence" value="ECO:0007669"/>
    <property type="project" value="UniProtKB-KW"/>
</dbReference>
<dbReference type="GO" id="GO:0007267">
    <property type="term" value="P:cell-cell signaling"/>
    <property type="evidence" value="ECO:0007669"/>
    <property type="project" value="InterPro"/>
</dbReference>
<dbReference type="GO" id="GO:0006508">
    <property type="term" value="P:proteolysis"/>
    <property type="evidence" value="ECO:0007669"/>
    <property type="project" value="UniProtKB-KW"/>
</dbReference>
<dbReference type="FunFam" id="3.30.1380.10:FF:000005">
    <property type="entry name" value="Sonic hedgehog signaling molecule"/>
    <property type="match status" value="1"/>
</dbReference>
<dbReference type="Gene3D" id="3.30.1380.10">
    <property type="match status" value="1"/>
</dbReference>
<dbReference type="InterPro" id="IPR001657">
    <property type="entry name" value="Hedgehog"/>
</dbReference>
<dbReference type="InterPro" id="IPR009045">
    <property type="entry name" value="Hedgehog_sig/DD-Pept_Zn-bd_sf"/>
</dbReference>
<dbReference type="InterPro" id="IPR050387">
    <property type="entry name" value="Hedgehog_Signaling"/>
</dbReference>
<dbReference type="InterPro" id="IPR000320">
    <property type="entry name" value="Hedgehog_signalling_dom"/>
</dbReference>
<dbReference type="PANTHER" id="PTHR11889">
    <property type="entry name" value="HEDGEHOG"/>
    <property type="match status" value="1"/>
</dbReference>
<dbReference type="PANTHER" id="PTHR11889:SF84">
    <property type="entry name" value="HEDGEHOG PROTEIN"/>
    <property type="match status" value="1"/>
</dbReference>
<dbReference type="Pfam" id="PF01085">
    <property type="entry name" value="HH_signal"/>
    <property type="match status" value="1"/>
</dbReference>
<dbReference type="PRINTS" id="PR00632">
    <property type="entry name" value="SONICHHOG"/>
</dbReference>
<dbReference type="SUPFAM" id="SSF55166">
    <property type="entry name" value="Hedgehog/DD-peptidase"/>
    <property type="match status" value="1"/>
</dbReference>
<sequence>QRCKDCLYKLAIAVMNQWPGVRLRVTEAWDEDGHHPPGSLHYEGRAVDITTSDRDTKKYGLLAQLAVEAGFDWVHYESKYHVHCSVKA</sequence>
<protein>
    <recommendedName>
        <fullName>Desert hedgehog protein</fullName>
        <shortName>DHH</shortName>
    </recommendedName>
</protein>
<keyword id="KW-0068">Autocatalytic cleavage</keyword>
<keyword id="KW-0106">Calcium</keyword>
<keyword id="KW-1003">Cell membrane</keyword>
<keyword id="KW-0217">Developmental protein</keyword>
<keyword id="KW-0378">Hydrolase</keyword>
<keyword id="KW-0472">Membrane</keyword>
<keyword id="KW-0479">Metal-binding</keyword>
<keyword id="KW-0645">Protease</keyword>
<keyword id="KW-1185">Reference proteome</keyword>
<keyword id="KW-0964">Secreted</keyword>
<keyword id="KW-0862">Zinc</keyword>
<gene>
    <name type="primary">dhh</name>
</gene>
<organism>
    <name type="scientific">Danio rerio</name>
    <name type="common">Zebrafish</name>
    <name type="synonym">Brachydanio rerio</name>
    <dbReference type="NCBI Taxonomy" id="7955"/>
    <lineage>
        <taxon>Eukaryota</taxon>
        <taxon>Metazoa</taxon>
        <taxon>Chordata</taxon>
        <taxon>Craniata</taxon>
        <taxon>Vertebrata</taxon>
        <taxon>Euteleostomi</taxon>
        <taxon>Actinopterygii</taxon>
        <taxon>Neopterygii</taxon>
        <taxon>Teleostei</taxon>
        <taxon>Ostariophysi</taxon>
        <taxon>Cypriniformes</taxon>
        <taxon>Danionidae</taxon>
        <taxon>Danioninae</taxon>
        <taxon>Danio</taxon>
    </lineage>
</organism>
<evidence type="ECO:0000250" key="1"/>
<evidence type="ECO:0000250" key="2">
    <source>
        <dbReference type="UniProtKB" id="O43323"/>
    </source>
</evidence>
<evidence type="ECO:0000305" key="3"/>